<protein>
    <recommendedName>
        <fullName evidence="7">Self-sufficient cytochrome P450 monooxygenase CYP505E4</fullName>
    </recommendedName>
    <alternativeName>
        <fullName evidence="7">Bifunctional cytochrome P450/NADPH--P450 reductase CYP505E4</fullName>
    </alternativeName>
    <domain>
        <recommendedName>
            <fullName evidence="7">Cytochrome P450 monooxygenase</fullName>
            <ecNumber evidence="6">1.14.14.1</ecNumber>
        </recommendedName>
    </domain>
    <domain>
        <recommendedName>
            <fullName evidence="7">NADPH--cytochrome P450 reductase</fullName>
            <ecNumber evidence="6">1.6.2.4</ecNumber>
        </recommendedName>
    </domain>
</protein>
<dbReference type="EC" id="1.14.14.1" evidence="6"/>
<dbReference type="EC" id="1.6.2.4" evidence="6"/>
<dbReference type="EMBL" id="LLXE01000070">
    <property type="protein sequence ID" value="KUM63529.1"/>
    <property type="molecule type" value="Genomic_DNA"/>
</dbReference>
<dbReference type="SMR" id="A0A101MN42"/>
<dbReference type="STRING" id="48697.A0A101MN42"/>
<dbReference type="Proteomes" id="UP000055045">
    <property type="component" value="Unassembled WGS sequence"/>
</dbReference>
<dbReference type="GO" id="GO:0005829">
    <property type="term" value="C:cytosol"/>
    <property type="evidence" value="ECO:0007669"/>
    <property type="project" value="TreeGrafter"/>
</dbReference>
<dbReference type="GO" id="GO:0070330">
    <property type="term" value="F:aromatase activity"/>
    <property type="evidence" value="ECO:0007669"/>
    <property type="project" value="InterPro"/>
</dbReference>
<dbReference type="GO" id="GO:0050660">
    <property type="term" value="F:flavin adenine dinucleotide binding"/>
    <property type="evidence" value="ECO:0007669"/>
    <property type="project" value="TreeGrafter"/>
</dbReference>
<dbReference type="GO" id="GO:0010181">
    <property type="term" value="F:FMN binding"/>
    <property type="evidence" value="ECO:0007669"/>
    <property type="project" value="InterPro"/>
</dbReference>
<dbReference type="GO" id="GO:0020037">
    <property type="term" value="F:heme binding"/>
    <property type="evidence" value="ECO:0007669"/>
    <property type="project" value="InterPro"/>
</dbReference>
<dbReference type="GO" id="GO:0005506">
    <property type="term" value="F:iron ion binding"/>
    <property type="evidence" value="ECO:0007669"/>
    <property type="project" value="InterPro"/>
</dbReference>
<dbReference type="GO" id="GO:0003958">
    <property type="term" value="F:NADPH-hemoprotein reductase activity"/>
    <property type="evidence" value="ECO:0007669"/>
    <property type="project" value="UniProtKB-EC"/>
</dbReference>
<dbReference type="GO" id="GO:0043386">
    <property type="term" value="P:mycotoxin biosynthetic process"/>
    <property type="evidence" value="ECO:0007669"/>
    <property type="project" value="UniProtKB-ARBA"/>
</dbReference>
<dbReference type="CDD" id="cd06206">
    <property type="entry name" value="bifunctional_CYPOR"/>
    <property type="match status" value="1"/>
</dbReference>
<dbReference type="CDD" id="cd11068">
    <property type="entry name" value="CYP120A1"/>
    <property type="match status" value="1"/>
</dbReference>
<dbReference type="FunFam" id="1.10.630.10:FF:000040">
    <property type="entry name" value="Bifunctional cytochrome P450/NADPH--P450 reductase"/>
    <property type="match status" value="1"/>
</dbReference>
<dbReference type="Gene3D" id="3.40.50.360">
    <property type="match status" value="1"/>
</dbReference>
<dbReference type="Gene3D" id="1.10.630.10">
    <property type="entry name" value="Cytochrome P450"/>
    <property type="match status" value="1"/>
</dbReference>
<dbReference type="Gene3D" id="1.20.990.10">
    <property type="entry name" value="NADPH-cytochrome p450 Reductase, Chain A, domain 3"/>
    <property type="match status" value="1"/>
</dbReference>
<dbReference type="Gene3D" id="3.40.50.80">
    <property type="entry name" value="Nucleotide-binding domain of ferredoxin-NADP reductase (FNR) module"/>
    <property type="match status" value="1"/>
</dbReference>
<dbReference type="Gene3D" id="2.40.30.10">
    <property type="entry name" value="Translation factors"/>
    <property type="match status" value="1"/>
</dbReference>
<dbReference type="InterPro" id="IPR023206">
    <property type="entry name" value="Bifunctional_P450_P450_red"/>
</dbReference>
<dbReference type="InterPro" id="IPR003097">
    <property type="entry name" value="CysJ-like_FAD-binding"/>
</dbReference>
<dbReference type="InterPro" id="IPR001128">
    <property type="entry name" value="Cyt_P450"/>
</dbReference>
<dbReference type="InterPro" id="IPR017972">
    <property type="entry name" value="Cyt_P450_CS"/>
</dbReference>
<dbReference type="InterPro" id="IPR002401">
    <property type="entry name" value="Cyt_P450_E_grp-I"/>
</dbReference>
<dbReference type="InterPro" id="IPR036396">
    <property type="entry name" value="Cyt_P450_sf"/>
</dbReference>
<dbReference type="InterPro" id="IPR017927">
    <property type="entry name" value="FAD-bd_FR_type"/>
</dbReference>
<dbReference type="InterPro" id="IPR008254">
    <property type="entry name" value="Flavodoxin/NO_synth"/>
</dbReference>
<dbReference type="InterPro" id="IPR029039">
    <property type="entry name" value="Flavoprotein-like_sf"/>
</dbReference>
<dbReference type="InterPro" id="IPR039261">
    <property type="entry name" value="FNR_nucleotide-bd"/>
</dbReference>
<dbReference type="InterPro" id="IPR023173">
    <property type="entry name" value="NADPH_Cyt_P450_Rdtase_alpha"/>
</dbReference>
<dbReference type="InterPro" id="IPR001433">
    <property type="entry name" value="OxRdtase_FAD/NAD-bd"/>
</dbReference>
<dbReference type="InterPro" id="IPR017938">
    <property type="entry name" value="Riboflavin_synthase-like_b-brl"/>
</dbReference>
<dbReference type="PANTHER" id="PTHR19384:SF127">
    <property type="entry name" value="BIFUNCTIONAL CYTOCHROME P450_NADPH--P450 REDUCTASE"/>
    <property type="match status" value="1"/>
</dbReference>
<dbReference type="PANTHER" id="PTHR19384">
    <property type="entry name" value="NITRIC OXIDE SYNTHASE-RELATED"/>
    <property type="match status" value="1"/>
</dbReference>
<dbReference type="Pfam" id="PF00667">
    <property type="entry name" value="FAD_binding_1"/>
    <property type="match status" value="1"/>
</dbReference>
<dbReference type="Pfam" id="PF00258">
    <property type="entry name" value="Flavodoxin_1"/>
    <property type="match status" value="1"/>
</dbReference>
<dbReference type="Pfam" id="PF00175">
    <property type="entry name" value="NAD_binding_1"/>
    <property type="match status" value="1"/>
</dbReference>
<dbReference type="Pfam" id="PF00067">
    <property type="entry name" value="p450"/>
    <property type="match status" value="1"/>
</dbReference>
<dbReference type="PIRSF" id="PIRSF000209">
    <property type="entry name" value="Bifunctional_P450_P450R"/>
    <property type="match status" value="1"/>
</dbReference>
<dbReference type="PRINTS" id="PR00463">
    <property type="entry name" value="EP450I"/>
</dbReference>
<dbReference type="PRINTS" id="PR00385">
    <property type="entry name" value="P450"/>
</dbReference>
<dbReference type="SUPFAM" id="SSF48264">
    <property type="entry name" value="Cytochrome P450"/>
    <property type="match status" value="1"/>
</dbReference>
<dbReference type="SUPFAM" id="SSF52343">
    <property type="entry name" value="Ferredoxin reductase-like, C-terminal NADP-linked domain"/>
    <property type="match status" value="1"/>
</dbReference>
<dbReference type="SUPFAM" id="SSF52218">
    <property type="entry name" value="Flavoproteins"/>
    <property type="match status" value="1"/>
</dbReference>
<dbReference type="SUPFAM" id="SSF63380">
    <property type="entry name" value="Riboflavin synthase domain-like"/>
    <property type="match status" value="1"/>
</dbReference>
<dbReference type="PROSITE" id="PS00086">
    <property type="entry name" value="CYTOCHROME_P450"/>
    <property type="match status" value="1"/>
</dbReference>
<dbReference type="PROSITE" id="PS51384">
    <property type="entry name" value="FAD_FR"/>
    <property type="match status" value="1"/>
</dbReference>
<dbReference type="PROSITE" id="PS50902">
    <property type="entry name" value="FLAVODOXIN_LIKE"/>
    <property type="match status" value="1"/>
</dbReference>
<name>CYPE4_PENFR</name>
<reference key="1">
    <citation type="journal article" date="2016" name="IMA Fungus">
        <title>IMA Genome-F 6: Draft genome sequences of Armillaria fuscipes, Ceratocystiopsis minuta, Ceratocystis adiposa, Endoconidiophora laricicola, E. polonica and Penicillium freii DAOMC 242723.</title>
        <authorList>
            <person name="Wingfield B.D."/>
            <person name="Ambler J.M."/>
            <person name="Coetzee M.P."/>
            <person name="de Beer Z.W."/>
            <person name="Duong T.A."/>
            <person name="Joubert F."/>
            <person name="Hammerbacher A."/>
            <person name="McTaggart A.R."/>
            <person name="Naidoo K."/>
            <person name="Nguyen H.D."/>
            <person name="Ponomareva E."/>
            <person name="Santana Q.S."/>
            <person name="Seifert K.A."/>
            <person name="Steenkamp E.T."/>
            <person name="Trollip C."/>
            <person name="van der Nest M.A."/>
            <person name="Visagie C.M."/>
            <person name="Wilken P.M."/>
            <person name="Wingfield M.J."/>
            <person name="Yilmaz N."/>
        </authorList>
    </citation>
    <scope>NUCLEOTIDE SEQUENCE [LARGE SCALE GENOMIC DNA]</scope>
    <source>
        <strain>DAOM 242723</strain>
    </source>
</reference>
<reference key="2">
    <citation type="journal article" date="2023" name="Appl. Microbiol. Biotechnol.">
        <title>Delineation of the CYP505E subfamily of fungal self-sufficient in-chain hydroxylating cytochrome P450 monooxygenases.</title>
        <authorList>
            <person name="Smit M.S."/>
            <person name="Maseme M.J."/>
            <person name="van Marwijk J."/>
            <person name="Aschenbrenner J.C."/>
            <person name="Opperman D.J."/>
        </authorList>
    </citation>
    <scope>FUNCTION</scope>
    <scope>CATALYTIC ACTIVITY</scope>
</reference>
<sequence>MKDMDCIPGPKPLPVVGNLFDLDLDNALQSIIKMADEFGPLFQITVNRQKHIFATSQALVDELCDETRFHKAVIGGVEKLRMLAHDGLFTAHHGERGWGIAHRILMPAFGPLRIRDMFEDMSDVAHQLCFKWARQGSSTSINISEDFTRLTLDTIALCTMSFRLNSYYNSDTMHPFVQSMLYVLKEADLQSSLPEVANCVRVKAQRSMSKHIEAMRSIAGDIIKGRRDKPEPVNDLLNTLLNGRDPVTGEGMSDELIISNIITFLIAGHETTSGLLSFTFYYLLQHPQVLEQARNEVDEVVGVGPITVQHLAKLPYIDAIMKESLRLMPTAPSFTVTPKKPEVLGGKWMINPGQSVHVLLPVCLRDEAVFGPDAGEFRPNRMLEENFSKLPPNSWKPFGNGERGCIGRAFAWQEAQLVVASVLQTFDLVAEDPNYKLRVKETLTIKPDGFRVRATLRHGRSATALSQHNMSAGATSSPGSSAHPAGNKNAQDAAGGQSISFFYGSNSGTCKALAHRLASTMMTRGFTDQHLAPLDSAVDNLPKDQPTIIVTTTYEGQPTDDAKKFLAWLESGIVPSLHGVSYAVFGCGHQDWTKTFYRIPILIDDLMHKAGATRLTTRGEANAAVSDLFSDLEVWEETNLLPALREKFDASNSGEFESLDLQQLQISISKPTRVGMHRDLIEGKVTAIRTLTSPGVPEKRHVEFQITSDTTLRPGDHVNILPVNPPSTVLRALARFNLASDHIITFESSNALDLPQATPVSAAELFGSYLELSQPATRNNLKSLASTTPSDEDKQELLRFHDSYDSLIRDKRVSVLDLLEHFTSITLPIATFISMLPVLRVRTYSLSMAPSFKPLHCSLTFSVVNEPAWSGNGRYLGVGSNYLASLTPGSILYVSPRPAKEAFHLPADQSSKPIIMICAGSGLAPFRSFIQDRMAWLQQGKPLAKALLFFGCRGPQLDDLYHDELSEFESAGVVEVRRAYSKVPNHYPGKGCRYVQHRLFAETETIQDMWAHNATLYLCGSATLAKGVKATLENMLGTLSEERYITEIF</sequence>
<evidence type="ECO:0000250" key="1">
    <source>
        <dbReference type="UniProtKB" id="P14779"/>
    </source>
</evidence>
<evidence type="ECO:0000250" key="2">
    <source>
        <dbReference type="UniProtKB" id="Q9Y8G7"/>
    </source>
</evidence>
<evidence type="ECO:0000255" key="3">
    <source>
        <dbReference type="PROSITE-ProRule" id="PRU00088"/>
    </source>
</evidence>
<evidence type="ECO:0000255" key="4">
    <source>
        <dbReference type="PROSITE-ProRule" id="PRU00716"/>
    </source>
</evidence>
<evidence type="ECO:0000256" key="5">
    <source>
        <dbReference type="SAM" id="MobiDB-lite"/>
    </source>
</evidence>
<evidence type="ECO:0000269" key="6">
    <source>
    </source>
</evidence>
<evidence type="ECO:0000303" key="7">
    <source>
    </source>
</evidence>
<evidence type="ECO:0000305" key="8"/>
<feature type="chain" id="PRO_0000459040" description="Self-sufficient cytochrome P450 monooxygenase CYP505E4">
    <location>
        <begin position="1"/>
        <end position="1049"/>
    </location>
</feature>
<feature type="domain" description="Flavodoxin-like" evidence="3">
    <location>
        <begin position="499"/>
        <end position="640"/>
    </location>
</feature>
<feature type="domain" description="FAD-binding FR-type" evidence="4">
    <location>
        <begin position="678"/>
        <end position="906"/>
    </location>
</feature>
<feature type="region of interest" description="Disordered" evidence="5">
    <location>
        <begin position="462"/>
        <end position="492"/>
    </location>
</feature>
<feature type="compositionally biased region" description="Low complexity" evidence="5">
    <location>
        <begin position="471"/>
        <end position="486"/>
    </location>
</feature>
<feature type="binding site" description="axial binding residue" evidence="1">
    <location>
        <position position="405"/>
    </location>
    <ligand>
        <name>heme</name>
        <dbReference type="ChEBI" id="CHEBI:30413"/>
    </ligand>
    <ligandPart>
        <name>Fe</name>
        <dbReference type="ChEBI" id="CHEBI:18248"/>
    </ligandPart>
</feature>
<feature type="binding site" evidence="3">
    <location>
        <begin position="505"/>
        <end position="509"/>
    </location>
    <ligand>
        <name>FMN</name>
        <dbReference type="ChEBI" id="CHEBI:58210"/>
    </ligand>
</feature>
<feature type="binding site" evidence="3">
    <location>
        <begin position="584"/>
        <end position="616"/>
    </location>
    <ligand>
        <name>FMN</name>
        <dbReference type="ChEBI" id="CHEBI:58210"/>
    </ligand>
</feature>
<proteinExistence type="evidence at protein level"/>
<gene>
    <name evidence="7" type="primary">CYP505E4</name>
    <name type="ORF">ACN42_g3547</name>
</gene>
<comment type="function">
    <text evidence="6">Self-sufficient cytochrome P450 monooxygenase that catalyzes the regioselective in-chain hydroxylation of alkanes, fatty alcohols, and fatty acids at the omega-7 position (PubMed:36607403). Performs hydroxylation of C10-C16 n-alkanes and C12 and C14 fatty alcohols; and thereby enables the one step biocatalytic synthesis of rare alcohols such as 5-dodecanol and 7-tetradecanol (PubMed:36607403). Converts 1-dodecanol into 1,5-dodecanediol as major product with very little sub-terminally hydroxylated products with the 1,4-dodecanediol and 1,6-dodecanediol more abundant (PubMed:36607403). Converts dodecanoic acid to 5-hydroxydodecanoic acid which can be further converted into delta-dodecalactone by lactonization of the 5-hydroxy acid at low pH (PubMed:36607403). Also gives sub-terminal hydroxylation of dodecanoic acid with 9-hydroxydodecanoic acid being the second most abundant product (PubMed:36607403).</text>
</comment>
<comment type="catalytic activity">
    <reaction evidence="6">
        <text>2 oxidized [cytochrome P450] + NADPH = 2 reduced [cytochrome P450] + NADP(+) + H(+)</text>
        <dbReference type="Rhea" id="RHEA:24040"/>
        <dbReference type="Rhea" id="RHEA-COMP:14627"/>
        <dbReference type="Rhea" id="RHEA-COMP:14628"/>
        <dbReference type="ChEBI" id="CHEBI:15378"/>
        <dbReference type="ChEBI" id="CHEBI:55376"/>
        <dbReference type="ChEBI" id="CHEBI:57783"/>
        <dbReference type="ChEBI" id="CHEBI:58349"/>
        <dbReference type="ChEBI" id="CHEBI:60344"/>
        <dbReference type="EC" id="1.6.2.4"/>
    </reaction>
</comment>
<comment type="catalytic activity">
    <reaction evidence="6">
        <text>an organic molecule + reduced [NADPH--hemoprotein reductase] + O2 = an alcohol + oxidized [NADPH--hemoprotein reductase] + H2O + H(+)</text>
        <dbReference type="Rhea" id="RHEA:17149"/>
        <dbReference type="Rhea" id="RHEA-COMP:11964"/>
        <dbReference type="Rhea" id="RHEA-COMP:11965"/>
        <dbReference type="ChEBI" id="CHEBI:15377"/>
        <dbReference type="ChEBI" id="CHEBI:15378"/>
        <dbReference type="ChEBI" id="CHEBI:15379"/>
        <dbReference type="ChEBI" id="CHEBI:30879"/>
        <dbReference type="ChEBI" id="CHEBI:57618"/>
        <dbReference type="ChEBI" id="CHEBI:58210"/>
        <dbReference type="ChEBI" id="CHEBI:142491"/>
        <dbReference type="EC" id="1.14.14.1"/>
    </reaction>
</comment>
<comment type="catalytic activity">
    <reaction evidence="6">
        <text>dodecanoate + reduced [NADPH--hemoprotein reductase] + O2 = 5-hydroxydodecanoate + oxidized [NADPH--hemoprotein reductase] + H2O + H(+)</text>
        <dbReference type="Rhea" id="RHEA:76723"/>
        <dbReference type="Rhea" id="RHEA-COMP:11964"/>
        <dbReference type="Rhea" id="RHEA-COMP:11965"/>
        <dbReference type="ChEBI" id="CHEBI:15377"/>
        <dbReference type="ChEBI" id="CHEBI:15378"/>
        <dbReference type="ChEBI" id="CHEBI:15379"/>
        <dbReference type="ChEBI" id="CHEBI:18262"/>
        <dbReference type="ChEBI" id="CHEBI:57618"/>
        <dbReference type="ChEBI" id="CHEBI:58210"/>
        <dbReference type="ChEBI" id="CHEBI:195418"/>
    </reaction>
    <physiologicalReaction direction="left-to-right" evidence="6">
        <dbReference type="Rhea" id="RHEA:76724"/>
    </physiologicalReaction>
</comment>
<comment type="catalytic activity">
    <reaction evidence="6">
        <text>tetradecanoate + reduced [NADPH--hemoprotein reductase] + O2 = 7-hydroxytetradecanoate + oxidized [NADPH--hemoprotein reductase] + H2O + H(+)</text>
        <dbReference type="Rhea" id="RHEA:76727"/>
        <dbReference type="Rhea" id="RHEA-COMP:11964"/>
        <dbReference type="Rhea" id="RHEA-COMP:11965"/>
        <dbReference type="ChEBI" id="CHEBI:15377"/>
        <dbReference type="ChEBI" id="CHEBI:15378"/>
        <dbReference type="ChEBI" id="CHEBI:15379"/>
        <dbReference type="ChEBI" id="CHEBI:30807"/>
        <dbReference type="ChEBI" id="CHEBI:57618"/>
        <dbReference type="ChEBI" id="CHEBI:58210"/>
        <dbReference type="ChEBI" id="CHEBI:195419"/>
    </reaction>
    <physiologicalReaction direction="left-to-right" evidence="6">
        <dbReference type="Rhea" id="RHEA:76728"/>
    </physiologicalReaction>
</comment>
<comment type="catalytic activity">
    <reaction evidence="6">
        <text>dodecan-1-ol + reduced [NADPH--hemoprotein reductase] + O2 = 1,5-dodecanediol + oxidized [NADPH--hemoprotein reductase] + H2O + H(+)</text>
        <dbReference type="Rhea" id="RHEA:76759"/>
        <dbReference type="Rhea" id="RHEA-COMP:11964"/>
        <dbReference type="Rhea" id="RHEA-COMP:11965"/>
        <dbReference type="ChEBI" id="CHEBI:15377"/>
        <dbReference type="ChEBI" id="CHEBI:15378"/>
        <dbReference type="ChEBI" id="CHEBI:15379"/>
        <dbReference type="ChEBI" id="CHEBI:28878"/>
        <dbReference type="ChEBI" id="CHEBI:57618"/>
        <dbReference type="ChEBI" id="CHEBI:58210"/>
        <dbReference type="ChEBI" id="CHEBI:195414"/>
    </reaction>
    <physiologicalReaction direction="left-to-right" evidence="6">
        <dbReference type="Rhea" id="RHEA:76760"/>
    </physiologicalReaction>
</comment>
<comment type="catalytic activity">
    <reaction evidence="6">
        <text>dodecan-1-ol + reduced [NADPH--hemoprotein reductase] + O2 = 1,4-dodecanediol + oxidized [NADPH--hemoprotein reductase] + H2O + H(+)</text>
        <dbReference type="Rhea" id="RHEA:76763"/>
        <dbReference type="Rhea" id="RHEA-COMP:11964"/>
        <dbReference type="Rhea" id="RHEA-COMP:11965"/>
        <dbReference type="ChEBI" id="CHEBI:15377"/>
        <dbReference type="ChEBI" id="CHEBI:15378"/>
        <dbReference type="ChEBI" id="CHEBI:15379"/>
        <dbReference type="ChEBI" id="CHEBI:28878"/>
        <dbReference type="ChEBI" id="CHEBI:57618"/>
        <dbReference type="ChEBI" id="CHEBI:58210"/>
        <dbReference type="ChEBI" id="CHEBI:195422"/>
    </reaction>
    <physiologicalReaction direction="left-to-right" evidence="6">
        <dbReference type="Rhea" id="RHEA:76764"/>
    </physiologicalReaction>
</comment>
<comment type="catalytic activity">
    <reaction evidence="6">
        <text>dodecan-1-ol + reduced [NADPH--hemoprotein reductase] + O2 = 1,6-dodecanediol + oxidized [NADPH--hemoprotein reductase] + H2O + H(+)</text>
        <dbReference type="Rhea" id="RHEA:76779"/>
        <dbReference type="Rhea" id="RHEA-COMP:11964"/>
        <dbReference type="Rhea" id="RHEA-COMP:11965"/>
        <dbReference type="ChEBI" id="CHEBI:15377"/>
        <dbReference type="ChEBI" id="CHEBI:15378"/>
        <dbReference type="ChEBI" id="CHEBI:15379"/>
        <dbReference type="ChEBI" id="CHEBI:28878"/>
        <dbReference type="ChEBI" id="CHEBI:57618"/>
        <dbReference type="ChEBI" id="CHEBI:58210"/>
        <dbReference type="ChEBI" id="CHEBI:195445"/>
    </reaction>
    <physiologicalReaction direction="left-to-right" evidence="6">
        <dbReference type="Rhea" id="RHEA:76780"/>
    </physiologicalReaction>
</comment>
<comment type="cofactor">
    <cofactor evidence="2">
        <name>FAD</name>
        <dbReference type="ChEBI" id="CHEBI:57692"/>
    </cofactor>
    <text evidence="2">Binds 1 FAD.</text>
</comment>
<comment type="cofactor">
    <cofactor evidence="2">
        <name>FMN</name>
        <dbReference type="ChEBI" id="CHEBI:58210"/>
    </cofactor>
    <text evidence="2">Binds 1 FMN.</text>
</comment>
<comment type="cofactor">
    <cofactor evidence="2">
        <name>heme</name>
        <dbReference type="ChEBI" id="CHEBI:30413"/>
    </cofactor>
</comment>
<comment type="similarity">
    <text evidence="8">In the N-terminal section; belongs to the cytochrome P450 family.</text>
</comment>
<organism>
    <name type="scientific">Penicillium freii</name>
    <dbReference type="NCBI Taxonomy" id="48697"/>
    <lineage>
        <taxon>Eukaryota</taxon>
        <taxon>Fungi</taxon>
        <taxon>Dikarya</taxon>
        <taxon>Ascomycota</taxon>
        <taxon>Pezizomycotina</taxon>
        <taxon>Eurotiomycetes</taxon>
        <taxon>Eurotiomycetidae</taxon>
        <taxon>Eurotiales</taxon>
        <taxon>Aspergillaceae</taxon>
        <taxon>Penicillium</taxon>
    </lineage>
</organism>
<keyword id="KW-0249">Electron transport</keyword>
<keyword id="KW-0274">FAD</keyword>
<keyword id="KW-0285">Flavoprotein</keyword>
<keyword id="KW-0288">FMN</keyword>
<keyword id="KW-0349">Heme</keyword>
<keyword id="KW-0408">Iron</keyword>
<keyword id="KW-0479">Metal-binding</keyword>
<keyword id="KW-0503">Monooxygenase</keyword>
<keyword id="KW-0521">NADP</keyword>
<keyword id="KW-0560">Oxidoreductase</keyword>
<keyword id="KW-1185">Reference proteome</keyword>
<keyword id="KW-0813">Transport</keyword>
<accession>A0A101MN42</accession>